<keyword id="KW-0539">Nucleus</keyword>
<keyword id="KW-1185">Reference proteome</keyword>
<gene>
    <name type="primary">Fam124b</name>
</gene>
<accession>Q8BLQ0</accession>
<dbReference type="EMBL" id="AK043867">
    <property type="protein sequence ID" value="BAC31685.1"/>
    <property type="molecule type" value="mRNA"/>
</dbReference>
<dbReference type="CCDS" id="CCDS15093.1"/>
<dbReference type="RefSeq" id="NP_775601.1">
    <property type="nucleotide sequence ID" value="NM_173425.3"/>
</dbReference>
<dbReference type="FunCoup" id="Q8BLQ0">
    <property type="interactions" value="1261"/>
</dbReference>
<dbReference type="STRING" id="10090.ENSMUSP00000052208"/>
<dbReference type="iPTMnet" id="Q8BLQ0"/>
<dbReference type="PhosphoSitePlus" id="Q8BLQ0"/>
<dbReference type="PaxDb" id="10090-ENSMUSP00000052208"/>
<dbReference type="ProteomicsDB" id="271516"/>
<dbReference type="Antibodypedia" id="47677">
    <property type="antibodies" value="63 antibodies from 15 providers"/>
</dbReference>
<dbReference type="DNASU" id="241128"/>
<dbReference type="Ensembl" id="ENSMUST00000058748.2">
    <property type="protein sequence ID" value="ENSMUSP00000052208.2"/>
    <property type="gene ID" value="ENSMUSG00000043230.3"/>
</dbReference>
<dbReference type="GeneID" id="241128"/>
<dbReference type="KEGG" id="mmu:241128"/>
<dbReference type="UCSC" id="uc007brb.2">
    <property type="organism name" value="mouse"/>
</dbReference>
<dbReference type="AGR" id="MGI:3026880"/>
<dbReference type="CTD" id="79843"/>
<dbReference type="MGI" id="MGI:3026880">
    <property type="gene designation" value="Fam124b"/>
</dbReference>
<dbReference type="VEuPathDB" id="HostDB:ENSMUSG00000043230"/>
<dbReference type="eggNOG" id="ENOG502QUJG">
    <property type="taxonomic scope" value="Eukaryota"/>
</dbReference>
<dbReference type="GeneTree" id="ENSGT00590000083134"/>
<dbReference type="HOGENOM" id="CLU_037215_0_0_1"/>
<dbReference type="InParanoid" id="Q8BLQ0"/>
<dbReference type="OMA" id="PWQCYPA"/>
<dbReference type="OrthoDB" id="10023686at2759"/>
<dbReference type="PhylomeDB" id="Q8BLQ0"/>
<dbReference type="TreeFam" id="TF328699"/>
<dbReference type="BioGRID-ORCS" id="241128">
    <property type="hits" value="1 hit in 75 CRISPR screens"/>
</dbReference>
<dbReference type="PRO" id="PR:Q8BLQ0"/>
<dbReference type="Proteomes" id="UP000000589">
    <property type="component" value="Chromosome 1"/>
</dbReference>
<dbReference type="RNAct" id="Q8BLQ0">
    <property type="molecule type" value="protein"/>
</dbReference>
<dbReference type="Bgee" id="ENSMUSG00000043230">
    <property type="expression patterns" value="Expressed in spermatid and 51 other cell types or tissues"/>
</dbReference>
<dbReference type="GO" id="GO:0005739">
    <property type="term" value="C:mitochondrion"/>
    <property type="evidence" value="ECO:0007669"/>
    <property type="project" value="Ensembl"/>
</dbReference>
<dbReference type="GO" id="GO:0005654">
    <property type="term" value="C:nucleoplasm"/>
    <property type="evidence" value="ECO:0007669"/>
    <property type="project" value="Ensembl"/>
</dbReference>
<dbReference type="InterPro" id="IPR029380">
    <property type="entry name" value="FAM124"/>
</dbReference>
<dbReference type="InterPro" id="IPR046365">
    <property type="entry name" value="FAM124_dom"/>
</dbReference>
<dbReference type="PANTHER" id="PTHR14715">
    <property type="entry name" value="FAM124 DOMAIN-CONTAINING PROTEIN-RELATED"/>
    <property type="match status" value="1"/>
</dbReference>
<dbReference type="PANTHER" id="PTHR14715:SF2">
    <property type="entry name" value="PROTEIN FAM124B"/>
    <property type="match status" value="1"/>
</dbReference>
<dbReference type="Pfam" id="PF15067">
    <property type="entry name" value="FAM124"/>
    <property type="match status" value="1"/>
</dbReference>
<evidence type="ECO:0000250" key="1">
    <source>
        <dbReference type="UniProtKB" id="Q9H5Z6"/>
    </source>
</evidence>
<evidence type="ECO:0000256" key="2">
    <source>
        <dbReference type="SAM" id="MobiDB-lite"/>
    </source>
</evidence>
<evidence type="ECO:0000269" key="3">
    <source>
    </source>
</evidence>
<evidence type="ECO:0000305" key="4"/>
<proteinExistence type="evidence at protein level"/>
<name>F124B_MOUSE</name>
<organism>
    <name type="scientific">Mus musculus</name>
    <name type="common">Mouse</name>
    <dbReference type="NCBI Taxonomy" id="10090"/>
    <lineage>
        <taxon>Eukaryota</taxon>
        <taxon>Metazoa</taxon>
        <taxon>Chordata</taxon>
        <taxon>Craniata</taxon>
        <taxon>Vertebrata</taxon>
        <taxon>Euteleostomi</taxon>
        <taxon>Mammalia</taxon>
        <taxon>Eutheria</taxon>
        <taxon>Euarchontoglires</taxon>
        <taxon>Glires</taxon>
        <taxon>Rodentia</taxon>
        <taxon>Myomorpha</taxon>
        <taxon>Muroidea</taxon>
        <taxon>Muridae</taxon>
        <taxon>Murinae</taxon>
        <taxon>Mus</taxon>
        <taxon>Mus</taxon>
    </lineage>
</organism>
<comment type="subunit">
    <text evidence="1">Interacts with CHD7 and CHD8.</text>
</comment>
<comment type="subcellular location">
    <subcellularLocation>
        <location evidence="3">Nucleus</location>
    </subcellularLocation>
</comment>
<comment type="tissue specificity">
    <text evidence="3">Expressed strongly in lung, at slightly lower levels in heart, kidney, brain and testis, and weakly in liver (at protein level). In brain, highly expressed in cortex, hippocampus, dentate gyrus, caudate putamen and cerebellum (at protein level).</text>
</comment>
<comment type="developmental stage">
    <text evidence="3">At embryonic stage 12.5 dpc, detected in a wide range of tissues including brain, heart, lung, cochlea, dorsal root ganglia, and liver (at protein level).</text>
</comment>
<comment type="similarity">
    <text evidence="4">Belongs to the FAM124 family.</text>
</comment>
<feature type="chain" id="PRO_0000286385" description="Protein FAM124B">
    <location>
        <begin position="1"/>
        <end position="456"/>
    </location>
</feature>
<feature type="region of interest" description="Disordered" evidence="2">
    <location>
        <begin position="262"/>
        <end position="313"/>
    </location>
</feature>
<feature type="compositionally biased region" description="Polar residues" evidence="2">
    <location>
        <begin position="272"/>
        <end position="284"/>
    </location>
</feature>
<feature type="compositionally biased region" description="Basic residues" evidence="2">
    <location>
        <begin position="289"/>
        <end position="300"/>
    </location>
</feature>
<reference key="1">
    <citation type="journal article" date="2005" name="Science">
        <title>The transcriptional landscape of the mammalian genome.</title>
        <authorList>
            <person name="Carninci P."/>
            <person name="Kasukawa T."/>
            <person name="Katayama S."/>
            <person name="Gough J."/>
            <person name="Frith M.C."/>
            <person name="Maeda N."/>
            <person name="Oyama R."/>
            <person name="Ravasi T."/>
            <person name="Lenhard B."/>
            <person name="Wells C."/>
            <person name="Kodzius R."/>
            <person name="Shimokawa K."/>
            <person name="Bajic V.B."/>
            <person name="Brenner S.E."/>
            <person name="Batalov S."/>
            <person name="Forrest A.R."/>
            <person name="Zavolan M."/>
            <person name="Davis M.J."/>
            <person name="Wilming L.G."/>
            <person name="Aidinis V."/>
            <person name="Allen J.E."/>
            <person name="Ambesi-Impiombato A."/>
            <person name="Apweiler R."/>
            <person name="Aturaliya R.N."/>
            <person name="Bailey T.L."/>
            <person name="Bansal M."/>
            <person name="Baxter L."/>
            <person name="Beisel K.W."/>
            <person name="Bersano T."/>
            <person name="Bono H."/>
            <person name="Chalk A.M."/>
            <person name="Chiu K.P."/>
            <person name="Choudhary V."/>
            <person name="Christoffels A."/>
            <person name="Clutterbuck D.R."/>
            <person name="Crowe M.L."/>
            <person name="Dalla E."/>
            <person name="Dalrymple B.P."/>
            <person name="de Bono B."/>
            <person name="Della Gatta G."/>
            <person name="di Bernardo D."/>
            <person name="Down T."/>
            <person name="Engstrom P."/>
            <person name="Fagiolini M."/>
            <person name="Faulkner G."/>
            <person name="Fletcher C.F."/>
            <person name="Fukushima T."/>
            <person name="Furuno M."/>
            <person name="Futaki S."/>
            <person name="Gariboldi M."/>
            <person name="Georgii-Hemming P."/>
            <person name="Gingeras T.R."/>
            <person name="Gojobori T."/>
            <person name="Green R.E."/>
            <person name="Gustincich S."/>
            <person name="Harbers M."/>
            <person name="Hayashi Y."/>
            <person name="Hensch T.K."/>
            <person name="Hirokawa N."/>
            <person name="Hill D."/>
            <person name="Huminiecki L."/>
            <person name="Iacono M."/>
            <person name="Ikeo K."/>
            <person name="Iwama A."/>
            <person name="Ishikawa T."/>
            <person name="Jakt M."/>
            <person name="Kanapin A."/>
            <person name="Katoh M."/>
            <person name="Kawasawa Y."/>
            <person name="Kelso J."/>
            <person name="Kitamura H."/>
            <person name="Kitano H."/>
            <person name="Kollias G."/>
            <person name="Krishnan S.P."/>
            <person name="Kruger A."/>
            <person name="Kummerfeld S.K."/>
            <person name="Kurochkin I.V."/>
            <person name="Lareau L.F."/>
            <person name="Lazarevic D."/>
            <person name="Lipovich L."/>
            <person name="Liu J."/>
            <person name="Liuni S."/>
            <person name="McWilliam S."/>
            <person name="Madan Babu M."/>
            <person name="Madera M."/>
            <person name="Marchionni L."/>
            <person name="Matsuda H."/>
            <person name="Matsuzawa S."/>
            <person name="Miki H."/>
            <person name="Mignone F."/>
            <person name="Miyake S."/>
            <person name="Morris K."/>
            <person name="Mottagui-Tabar S."/>
            <person name="Mulder N."/>
            <person name="Nakano N."/>
            <person name="Nakauchi H."/>
            <person name="Ng P."/>
            <person name="Nilsson R."/>
            <person name="Nishiguchi S."/>
            <person name="Nishikawa S."/>
            <person name="Nori F."/>
            <person name="Ohara O."/>
            <person name="Okazaki Y."/>
            <person name="Orlando V."/>
            <person name="Pang K.C."/>
            <person name="Pavan W.J."/>
            <person name="Pavesi G."/>
            <person name="Pesole G."/>
            <person name="Petrovsky N."/>
            <person name="Piazza S."/>
            <person name="Reed J."/>
            <person name="Reid J.F."/>
            <person name="Ring B.Z."/>
            <person name="Ringwald M."/>
            <person name="Rost B."/>
            <person name="Ruan Y."/>
            <person name="Salzberg S.L."/>
            <person name="Sandelin A."/>
            <person name="Schneider C."/>
            <person name="Schoenbach C."/>
            <person name="Sekiguchi K."/>
            <person name="Semple C.A."/>
            <person name="Seno S."/>
            <person name="Sessa L."/>
            <person name="Sheng Y."/>
            <person name="Shibata Y."/>
            <person name="Shimada H."/>
            <person name="Shimada K."/>
            <person name="Silva D."/>
            <person name="Sinclair B."/>
            <person name="Sperling S."/>
            <person name="Stupka E."/>
            <person name="Sugiura K."/>
            <person name="Sultana R."/>
            <person name="Takenaka Y."/>
            <person name="Taki K."/>
            <person name="Tammoja K."/>
            <person name="Tan S.L."/>
            <person name="Tang S."/>
            <person name="Taylor M.S."/>
            <person name="Tegner J."/>
            <person name="Teichmann S.A."/>
            <person name="Ueda H.R."/>
            <person name="van Nimwegen E."/>
            <person name="Verardo R."/>
            <person name="Wei C.L."/>
            <person name="Yagi K."/>
            <person name="Yamanishi H."/>
            <person name="Zabarovsky E."/>
            <person name="Zhu S."/>
            <person name="Zimmer A."/>
            <person name="Hide W."/>
            <person name="Bult C."/>
            <person name="Grimmond S.M."/>
            <person name="Teasdale R.D."/>
            <person name="Liu E.T."/>
            <person name="Brusic V."/>
            <person name="Quackenbush J."/>
            <person name="Wahlestedt C."/>
            <person name="Mattick J.S."/>
            <person name="Hume D.A."/>
            <person name="Kai C."/>
            <person name="Sasaki D."/>
            <person name="Tomaru Y."/>
            <person name="Fukuda S."/>
            <person name="Kanamori-Katayama M."/>
            <person name="Suzuki M."/>
            <person name="Aoki J."/>
            <person name="Arakawa T."/>
            <person name="Iida J."/>
            <person name="Imamura K."/>
            <person name="Itoh M."/>
            <person name="Kato T."/>
            <person name="Kawaji H."/>
            <person name="Kawagashira N."/>
            <person name="Kawashima T."/>
            <person name="Kojima M."/>
            <person name="Kondo S."/>
            <person name="Konno H."/>
            <person name="Nakano K."/>
            <person name="Ninomiya N."/>
            <person name="Nishio T."/>
            <person name="Okada M."/>
            <person name="Plessy C."/>
            <person name="Shibata K."/>
            <person name="Shiraki T."/>
            <person name="Suzuki S."/>
            <person name="Tagami M."/>
            <person name="Waki K."/>
            <person name="Watahiki A."/>
            <person name="Okamura-Oho Y."/>
            <person name="Suzuki H."/>
            <person name="Kawai J."/>
            <person name="Hayashizaki Y."/>
        </authorList>
    </citation>
    <scope>NUCLEOTIDE SEQUENCE [LARGE SCALE MRNA]</scope>
    <source>
        <strain>C57BL/6J</strain>
        <tissue>Brain cortex</tissue>
    </source>
</reference>
<reference key="2">
    <citation type="journal article" date="2012" name="PLoS ONE">
        <title>Identification and characterization of FAM124B as a novel component of a CHD7 and CHD8 containing complex.</title>
        <authorList>
            <person name="Batsukh T."/>
            <person name="Schulz Y."/>
            <person name="Wolf S."/>
            <person name="Rabe T.I."/>
            <person name="Oellerich T."/>
            <person name="Urlaub H."/>
            <person name="Schaefer I.M."/>
            <person name="Pauli S."/>
        </authorList>
    </citation>
    <scope>SUBCELLULAR LOCATION</scope>
    <scope>TISSUE SPECIFICITY</scope>
    <scope>DEVELOPMENTAL STAGE</scope>
</reference>
<sequence length="456" mass="52079">MDEIQEPLALTVHLLADTGNGLLLQQALDQLLECICPEVRLFLVSERARPVNYHEKYHPRRARFPGMSVLLFLQESLGQERLFRVLDFLRRSPWQGFPTQHAQGRSCSYLPANQEFYSLHNQMPVWGMRPVNCGTDILRVTLYCSFDNYEDAIRLYEMLLQRDATVQKSDFCFFVLYATEGFSLQLSLKQLPLGMSVDPKESSVLQFRVQEIGQLVPLLPNPCVPISSARWQTQDYDGNKILLQVHPKPGVGIKNGEHPFLNGCLRGDTHPQDSSLNSVSTQRTLEPRSRRRSRSRRFKVHSLELPQPSGSWENSTDPLWRRLGWSTLADSSASGMQQRRLSIPIEPKMGRNVLREDGFEKLEAETNVDTGFTIINSEPRRSFPSRFPRDFQSSQPPRCLSGSSLEVTVSPNQGVFKDRLHPLSLPSQRDFGAKKVISKCSHHLQAQGEEKEEFFI</sequence>
<protein>
    <recommendedName>
        <fullName>Protein FAM124B</fullName>
    </recommendedName>
</protein>